<reference key="1">
    <citation type="journal article" date="2006" name="J. Bacteriol.">
        <title>Pathogenomic sequence analysis of Bacillus cereus and Bacillus thuringiensis isolates closely related to Bacillus anthracis.</title>
        <authorList>
            <person name="Han C.S."/>
            <person name="Xie G."/>
            <person name="Challacombe J.F."/>
            <person name="Altherr M.R."/>
            <person name="Bhotika S.S."/>
            <person name="Bruce D."/>
            <person name="Campbell C.S."/>
            <person name="Campbell M.L."/>
            <person name="Chen J."/>
            <person name="Chertkov O."/>
            <person name="Cleland C."/>
            <person name="Dimitrijevic M."/>
            <person name="Doggett N.A."/>
            <person name="Fawcett J.J."/>
            <person name="Glavina T."/>
            <person name="Goodwin L.A."/>
            <person name="Hill K.K."/>
            <person name="Hitchcock P."/>
            <person name="Jackson P.J."/>
            <person name="Keim P."/>
            <person name="Kewalramani A.R."/>
            <person name="Longmire J."/>
            <person name="Lucas S."/>
            <person name="Malfatti S."/>
            <person name="McMurry K."/>
            <person name="Meincke L.J."/>
            <person name="Misra M."/>
            <person name="Moseman B.L."/>
            <person name="Mundt M."/>
            <person name="Munk A.C."/>
            <person name="Okinaka R.T."/>
            <person name="Parson-Quintana B."/>
            <person name="Reilly L.P."/>
            <person name="Richardson P."/>
            <person name="Robinson D.L."/>
            <person name="Rubin E."/>
            <person name="Saunders E."/>
            <person name="Tapia R."/>
            <person name="Tesmer J.G."/>
            <person name="Thayer N."/>
            <person name="Thompson L.S."/>
            <person name="Tice H."/>
            <person name="Ticknor L.O."/>
            <person name="Wills P.L."/>
            <person name="Brettin T.S."/>
            <person name="Gilna P."/>
        </authorList>
    </citation>
    <scope>NUCLEOTIDE SEQUENCE [LARGE SCALE GENOMIC DNA]</scope>
    <source>
        <strain>ZK / E33L</strain>
    </source>
</reference>
<organism>
    <name type="scientific">Bacillus cereus (strain ZK / E33L)</name>
    <dbReference type="NCBI Taxonomy" id="288681"/>
    <lineage>
        <taxon>Bacteria</taxon>
        <taxon>Bacillati</taxon>
        <taxon>Bacillota</taxon>
        <taxon>Bacilli</taxon>
        <taxon>Bacillales</taxon>
        <taxon>Bacillaceae</taxon>
        <taxon>Bacillus</taxon>
        <taxon>Bacillus cereus group</taxon>
    </lineage>
</organism>
<protein>
    <recommendedName>
        <fullName evidence="1">Adenylosuccinate synthetase</fullName>
        <shortName evidence="1">AMPSase</shortName>
        <shortName evidence="1">AdSS</shortName>
        <ecNumber evidence="1">6.3.4.4</ecNumber>
    </recommendedName>
    <alternativeName>
        <fullName evidence="1">IMP--aspartate ligase</fullName>
    </alternativeName>
</protein>
<sequence length="429" mass="47467">MSSVVVVGTQWGDEGKGKITDFLSEHAEVVARYQGGNNAGHTIVFGGVKYKLHLIPSGIFYKEKICVIGNGLVVDPKALLEELKYLHDRGVSTDNLRVSNRAHVILPYHLKQDELEEASKGDDKIGTTKKGIGPAYMDKAARIGIRMADLLDREAFKEKLERNLAQKNRLFEKMYDTEGFSVEEIFEEYFEYGQQIAQYVCDTSVVLNDALDNNHRVLFEGAQGVMLDIDHGTYPFVTSSNPIAGGVTVGTGVGPAKVTRVVGVCKAYTSRVGDGPFPTELHDEIGHQIREVGREYGTTTGRPRRVGWFDSVVVRHARRVSGLTDLSLNSIDVLTGIPTLKICVAYKCDGKVIDEVPANLNILAKCEPVYEELPGWTEDITGVRSLDELPENARKYVERVSELTGIQLSMFSVGPDRNQTNIVRNVYEA</sequence>
<feature type="chain" id="PRO_0000224251" description="Adenylosuccinate synthetase">
    <location>
        <begin position="1"/>
        <end position="429"/>
    </location>
</feature>
<feature type="active site" description="Proton acceptor" evidence="1">
    <location>
        <position position="13"/>
    </location>
</feature>
<feature type="active site" description="Proton donor" evidence="1">
    <location>
        <position position="41"/>
    </location>
</feature>
<feature type="binding site" evidence="1">
    <location>
        <begin position="12"/>
        <end position="18"/>
    </location>
    <ligand>
        <name>GTP</name>
        <dbReference type="ChEBI" id="CHEBI:37565"/>
    </ligand>
</feature>
<feature type="binding site" description="in other chain" evidence="1">
    <location>
        <begin position="13"/>
        <end position="16"/>
    </location>
    <ligand>
        <name>IMP</name>
        <dbReference type="ChEBI" id="CHEBI:58053"/>
        <note>ligand shared between dimeric partners</note>
    </ligand>
</feature>
<feature type="binding site" evidence="1">
    <location>
        <position position="13"/>
    </location>
    <ligand>
        <name>Mg(2+)</name>
        <dbReference type="ChEBI" id="CHEBI:18420"/>
    </ligand>
</feature>
<feature type="binding site" description="in other chain" evidence="1">
    <location>
        <begin position="38"/>
        <end position="41"/>
    </location>
    <ligand>
        <name>IMP</name>
        <dbReference type="ChEBI" id="CHEBI:58053"/>
        <note>ligand shared between dimeric partners</note>
    </ligand>
</feature>
<feature type="binding site" evidence="1">
    <location>
        <begin position="40"/>
        <end position="42"/>
    </location>
    <ligand>
        <name>GTP</name>
        <dbReference type="ChEBI" id="CHEBI:37565"/>
    </ligand>
</feature>
<feature type="binding site" evidence="1">
    <location>
        <position position="40"/>
    </location>
    <ligand>
        <name>Mg(2+)</name>
        <dbReference type="ChEBI" id="CHEBI:18420"/>
    </ligand>
</feature>
<feature type="binding site" description="in other chain" evidence="1">
    <location>
        <position position="128"/>
    </location>
    <ligand>
        <name>IMP</name>
        <dbReference type="ChEBI" id="CHEBI:58053"/>
        <note>ligand shared between dimeric partners</note>
    </ligand>
</feature>
<feature type="binding site" evidence="1">
    <location>
        <position position="142"/>
    </location>
    <ligand>
        <name>IMP</name>
        <dbReference type="ChEBI" id="CHEBI:58053"/>
        <note>ligand shared between dimeric partners</note>
    </ligand>
</feature>
<feature type="binding site" description="in other chain" evidence="1">
    <location>
        <position position="223"/>
    </location>
    <ligand>
        <name>IMP</name>
        <dbReference type="ChEBI" id="CHEBI:58053"/>
        <note>ligand shared between dimeric partners</note>
    </ligand>
</feature>
<feature type="binding site" description="in other chain" evidence="1">
    <location>
        <position position="238"/>
    </location>
    <ligand>
        <name>IMP</name>
        <dbReference type="ChEBI" id="CHEBI:58053"/>
        <note>ligand shared between dimeric partners</note>
    </ligand>
</feature>
<feature type="binding site" evidence="1">
    <location>
        <begin position="298"/>
        <end position="304"/>
    </location>
    <ligand>
        <name>substrate</name>
    </ligand>
</feature>
<feature type="binding site" description="in other chain" evidence="1">
    <location>
        <position position="302"/>
    </location>
    <ligand>
        <name>IMP</name>
        <dbReference type="ChEBI" id="CHEBI:58053"/>
        <note>ligand shared between dimeric partners</note>
    </ligand>
</feature>
<feature type="binding site" evidence="1">
    <location>
        <position position="304"/>
    </location>
    <ligand>
        <name>GTP</name>
        <dbReference type="ChEBI" id="CHEBI:37565"/>
    </ligand>
</feature>
<feature type="binding site" evidence="1">
    <location>
        <begin position="330"/>
        <end position="332"/>
    </location>
    <ligand>
        <name>GTP</name>
        <dbReference type="ChEBI" id="CHEBI:37565"/>
    </ligand>
</feature>
<feature type="binding site" evidence="1">
    <location>
        <begin position="412"/>
        <end position="414"/>
    </location>
    <ligand>
        <name>GTP</name>
        <dbReference type="ChEBI" id="CHEBI:37565"/>
    </ligand>
</feature>
<proteinExistence type="inferred from homology"/>
<accession>Q630D5</accession>
<comment type="function">
    <text evidence="1">Plays an important role in the de novo pathway of purine nucleotide biosynthesis. Catalyzes the first committed step in the biosynthesis of AMP from IMP.</text>
</comment>
<comment type="catalytic activity">
    <reaction evidence="1">
        <text>IMP + L-aspartate + GTP = N(6)-(1,2-dicarboxyethyl)-AMP + GDP + phosphate + 2 H(+)</text>
        <dbReference type="Rhea" id="RHEA:15753"/>
        <dbReference type="ChEBI" id="CHEBI:15378"/>
        <dbReference type="ChEBI" id="CHEBI:29991"/>
        <dbReference type="ChEBI" id="CHEBI:37565"/>
        <dbReference type="ChEBI" id="CHEBI:43474"/>
        <dbReference type="ChEBI" id="CHEBI:57567"/>
        <dbReference type="ChEBI" id="CHEBI:58053"/>
        <dbReference type="ChEBI" id="CHEBI:58189"/>
        <dbReference type="EC" id="6.3.4.4"/>
    </reaction>
</comment>
<comment type="cofactor">
    <cofactor evidence="1">
        <name>Mg(2+)</name>
        <dbReference type="ChEBI" id="CHEBI:18420"/>
    </cofactor>
    <text evidence="1">Binds 1 Mg(2+) ion per subunit.</text>
</comment>
<comment type="pathway">
    <text evidence="1">Purine metabolism; AMP biosynthesis via de novo pathway; AMP from IMP: step 1/2.</text>
</comment>
<comment type="subunit">
    <text evidence="1">Homodimer.</text>
</comment>
<comment type="subcellular location">
    <subcellularLocation>
        <location evidence="1">Cytoplasm</location>
    </subcellularLocation>
</comment>
<comment type="similarity">
    <text evidence="1">Belongs to the adenylosuccinate synthetase family.</text>
</comment>
<name>PURA_BACCZ</name>
<evidence type="ECO:0000255" key="1">
    <source>
        <dbReference type="HAMAP-Rule" id="MF_00011"/>
    </source>
</evidence>
<dbReference type="EC" id="6.3.4.4" evidence="1"/>
<dbReference type="EMBL" id="CP000001">
    <property type="protein sequence ID" value="AAU20294.1"/>
    <property type="molecule type" value="Genomic_DNA"/>
</dbReference>
<dbReference type="RefSeq" id="WP_000100220.1">
    <property type="nucleotide sequence ID" value="NZ_CP009968.1"/>
</dbReference>
<dbReference type="SMR" id="Q630D5"/>
<dbReference type="KEGG" id="bcz:BCE33L5164"/>
<dbReference type="PATRIC" id="fig|288681.22.peg.177"/>
<dbReference type="UniPathway" id="UPA00075">
    <property type="reaction ID" value="UER00335"/>
</dbReference>
<dbReference type="Proteomes" id="UP000002612">
    <property type="component" value="Chromosome"/>
</dbReference>
<dbReference type="GO" id="GO:0005737">
    <property type="term" value="C:cytoplasm"/>
    <property type="evidence" value="ECO:0007669"/>
    <property type="project" value="UniProtKB-SubCell"/>
</dbReference>
<dbReference type="GO" id="GO:0004019">
    <property type="term" value="F:adenylosuccinate synthase activity"/>
    <property type="evidence" value="ECO:0007669"/>
    <property type="project" value="UniProtKB-UniRule"/>
</dbReference>
<dbReference type="GO" id="GO:0005525">
    <property type="term" value="F:GTP binding"/>
    <property type="evidence" value="ECO:0007669"/>
    <property type="project" value="UniProtKB-UniRule"/>
</dbReference>
<dbReference type="GO" id="GO:0000287">
    <property type="term" value="F:magnesium ion binding"/>
    <property type="evidence" value="ECO:0007669"/>
    <property type="project" value="UniProtKB-UniRule"/>
</dbReference>
<dbReference type="GO" id="GO:0044208">
    <property type="term" value="P:'de novo' AMP biosynthetic process"/>
    <property type="evidence" value="ECO:0007669"/>
    <property type="project" value="UniProtKB-UniRule"/>
</dbReference>
<dbReference type="GO" id="GO:0046040">
    <property type="term" value="P:IMP metabolic process"/>
    <property type="evidence" value="ECO:0007669"/>
    <property type="project" value="TreeGrafter"/>
</dbReference>
<dbReference type="CDD" id="cd03108">
    <property type="entry name" value="AdSS"/>
    <property type="match status" value="1"/>
</dbReference>
<dbReference type="FunFam" id="1.10.300.10:FF:000001">
    <property type="entry name" value="Adenylosuccinate synthetase"/>
    <property type="match status" value="1"/>
</dbReference>
<dbReference type="FunFam" id="3.90.170.10:FF:000001">
    <property type="entry name" value="Adenylosuccinate synthetase"/>
    <property type="match status" value="1"/>
</dbReference>
<dbReference type="Gene3D" id="3.40.440.10">
    <property type="entry name" value="Adenylosuccinate Synthetase, subunit A, domain 1"/>
    <property type="match status" value="1"/>
</dbReference>
<dbReference type="Gene3D" id="1.10.300.10">
    <property type="entry name" value="Adenylosuccinate Synthetase, subunit A, domain 2"/>
    <property type="match status" value="1"/>
</dbReference>
<dbReference type="Gene3D" id="3.90.170.10">
    <property type="entry name" value="Adenylosuccinate Synthetase, subunit A, domain 3"/>
    <property type="match status" value="1"/>
</dbReference>
<dbReference type="HAMAP" id="MF_00011">
    <property type="entry name" value="Adenylosucc_synth"/>
    <property type="match status" value="1"/>
</dbReference>
<dbReference type="InterPro" id="IPR018220">
    <property type="entry name" value="Adenylosuccin_syn_GTP-bd"/>
</dbReference>
<dbReference type="InterPro" id="IPR033128">
    <property type="entry name" value="Adenylosuccin_syn_Lys_AS"/>
</dbReference>
<dbReference type="InterPro" id="IPR042109">
    <property type="entry name" value="Adenylosuccinate_synth_dom1"/>
</dbReference>
<dbReference type="InterPro" id="IPR042110">
    <property type="entry name" value="Adenylosuccinate_synth_dom2"/>
</dbReference>
<dbReference type="InterPro" id="IPR042111">
    <property type="entry name" value="Adenylosuccinate_synth_dom3"/>
</dbReference>
<dbReference type="InterPro" id="IPR001114">
    <property type="entry name" value="Adenylosuccinate_synthetase"/>
</dbReference>
<dbReference type="InterPro" id="IPR027417">
    <property type="entry name" value="P-loop_NTPase"/>
</dbReference>
<dbReference type="NCBIfam" id="NF002223">
    <property type="entry name" value="PRK01117.1"/>
    <property type="match status" value="1"/>
</dbReference>
<dbReference type="NCBIfam" id="TIGR00184">
    <property type="entry name" value="purA"/>
    <property type="match status" value="1"/>
</dbReference>
<dbReference type="PANTHER" id="PTHR11846">
    <property type="entry name" value="ADENYLOSUCCINATE SYNTHETASE"/>
    <property type="match status" value="1"/>
</dbReference>
<dbReference type="PANTHER" id="PTHR11846:SF0">
    <property type="entry name" value="ADENYLOSUCCINATE SYNTHETASE"/>
    <property type="match status" value="1"/>
</dbReference>
<dbReference type="Pfam" id="PF00709">
    <property type="entry name" value="Adenylsucc_synt"/>
    <property type="match status" value="1"/>
</dbReference>
<dbReference type="SMART" id="SM00788">
    <property type="entry name" value="Adenylsucc_synt"/>
    <property type="match status" value="1"/>
</dbReference>
<dbReference type="SUPFAM" id="SSF52540">
    <property type="entry name" value="P-loop containing nucleoside triphosphate hydrolases"/>
    <property type="match status" value="1"/>
</dbReference>
<dbReference type="PROSITE" id="PS01266">
    <property type="entry name" value="ADENYLOSUCCIN_SYN_1"/>
    <property type="match status" value="1"/>
</dbReference>
<dbReference type="PROSITE" id="PS00513">
    <property type="entry name" value="ADENYLOSUCCIN_SYN_2"/>
    <property type="match status" value="1"/>
</dbReference>
<gene>
    <name evidence="1" type="primary">purA</name>
    <name type="ordered locus">BCE33L5164</name>
</gene>
<keyword id="KW-0963">Cytoplasm</keyword>
<keyword id="KW-0342">GTP-binding</keyword>
<keyword id="KW-0436">Ligase</keyword>
<keyword id="KW-0460">Magnesium</keyword>
<keyword id="KW-0479">Metal-binding</keyword>
<keyword id="KW-0547">Nucleotide-binding</keyword>
<keyword id="KW-0658">Purine biosynthesis</keyword>